<gene>
    <name type="primary">gra-orf2</name>
</gene>
<organism>
    <name type="scientific">Streptomyces violaceoruber</name>
    <dbReference type="NCBI Taxonomy" id="1935"/>
    <lineage>
        <taxon>Bacteria</taxon>
        <taxon>Bacillati</taxon>
        <taxon>Actinomycetota</taxon>
        <taxon>Actinomycetes</taxon>
        <taxon>Kitasatosporales</taxon>
        <taxon>Streptomycetaceae</taxon>
        <taxon>Streptomyces</taxon>
        <taxon>Streptomyces violaceoruber group</taxon>
    </lineage>
</organism>
<name>KAS2_STRVN</name>
<evidence type="ECO:0000255" key="1">
    <source>
        <dbReference type="PROSITE-ProRule" id="PRU01348"/>
    </source>
</evidence>
<evidence type="ECO:0000305" key="2"/>
<reference key="1">
    <citation type="journal article" date="1989" name="EMBO J.">
        <title>Structure and deduced function of the granaticin-producing polyketide synthase gene cluster of Streptomyces violaceoruber Tu22.</title>
        <authorList>
            <person name="Sherman D.H."/>
            <person name="Malpartida F."/>
            <person name="Bibb M.J."/>
            <person name="Kieser H.M."/>
            <person name="Bibb M.J."/>
            <person name="Hopwood D.A."/>
        </authorList>
    </citation>
    <scope>NUCLEOTIDE SEQUENCE [GENOMIC DNA]</scope>
    <source>
        <strain>Tu22</strain>
    </source>
</reference>
<reference key="2">
    <citation type="journal article" date="1995" name="Mol. Gen. Genet.">
        <title>Identification of Streptomyces violaceoruber Tu22 genes involved in the biosynthesis of granaticin.</title>
        <authorList>
            <person name="Bechthold A."/>
            <person name="Sohng J.K."/>
            <person name="Smith T.M."/>
            <person name="Chu X."/>
            <person name="Floss H.G."/>
        </authorList>
    </citation>
    <scope>NUCLEOTIDE SEQUENCE [GENOMIC DNA]</scope>
    <source>
        <strain>Tu22</strain>
    </source>
</reference>
<reference key="3">
    <citation type="journal article" date="1998" name="Chem. Biol.">
        <title>The granaticin biosynthetic gene cluster of Streptomyces violaceoruber Tu22: sequence analysis and expression in a heterologous host.</title>
        <authorList>
            <person name="Ichinose K."/>
            <person name="Bedford D.J."/>
            <person name="Tornus D."/>
            <person name="Bechthold A."/>
            <person name="Bibb M.J."/>
            <person name="Revill W.P."/>
            <person name="Floss H.G."/>
            <person name="Hopwood D.A."/>
        </authorList>
    </citation>
    <scope>NUCLEOTIDE SEQUENCE [GENOMIC DNA]</scope>
    <source>
        <strain>Tu22</strain>
    </source>
</reference>
<accession>P16541</accession>
<proteinExistence type="inferred from homology"/>
<dbReference type="EC" id="2.3.1.-"/>
<dbReference type="EMBL" id="X16300">
    <property type="protein sequence ID" value="CAA34370.1"/>
    <property type="molecule type" value="Genomic_DNA"/>
</dbReference>
<dbReference type="EMBL" id="X16144">
    <property type="protein sequence ID" value="CAA34265.1"/>
    <property type="molecule type" value="Genomic_DNA"/>
</dbReference>
<dbReference type="EMBL" id="AJ011500">
    <property type="protein sequence ID" value="CAA09654.1"/>
    <property type="molecule type" value="Genomic_DNA"/>
</dbReference>
<dbReference type="PIR" id="S05394">
    <property type="entry name" value="S05394"/>
</dbReference>
<dbReference type="SMR" id="P16541"/>
<dbReference type="UniPathway" id="UPA00175"/>
<dbReference type="GO" id="GO:0004315">
    <property type="term" value="F:3-oxoacyl-[acyl-carrier-protein] synthase activity"/>
    <property type="evidence" value="ECO:0007669"/>
    <property type="project" value="TreeGrafter"/>
</dbReference>
<dbReference type="GO" id="GO:0017000">
    <property type="term" value="P:antibiotic biosynthetic process"/>
    <property type="evidence" value="ECO:0007669"/>
    <property type="project" value="UniProtKB-KW"/>
</dbReference>
<dbReference type="GO" id="GO:0006633">
    <property type="term" value="P:fatty acid biosynthetic process"/>
    <property type="evidence" value="ECO:0007669"/>
    <property type="project" value="TreeGrafter"/>
</dbReference>
<dbReference type="CDD" id="cd00832">
    <property type="entry name" value="CLF"/>
    <property type="match status" value="1"/>
</dbReference>
<dbReference type="Gene3D" id="3.40.47.10">
    <property type="match status" value="2"/>
</dbReference>
<dbReference type="InterPro" id="IPR000794">
    <property type="entry name" value="Beta-ketoacyl_synthase"/>
</dbReference>
<dbReference type="InterPro" id="IPR014031">
    <property type="entry name" value="Ketoacyl_synth_C"/>
</dbReference>
<dbReference type="InterPro" id="IPR014030">
    <property type="entry name" value="Ketoacyl_synth_N"/>
</dbReference>
<dbReference type="InterPro" id="IPR020841">
    <property type="entry name" value="PKS_Beta-ketoAc_synthase_dom"/>
</dbReference>
<dbReference type="InterPro" id="IPR016039">
    <property type="entry name" value="Thiolase-like"/>
</dbReference>
<dbReference type="PANTHER" id="PTHR11712:SF322">
    <property type="entry name" value="POLYKETIDE BETA-KETOACYL SYNTHASE 2-RELATED"/>
    <property type="match status" value="1"/>
</dbReference>
<dbReference type="PANTHER" id="PTHR11712">
    <property type="entry name" value="POLYKETIDE SYNTHASE-RELATED"/>
    <property type="match status" value="1"/>
</dbReference>
<dbReference type="Pfam" id="PF00109">
    <property type="entry name" value="ketoacyl-synt"/>
    <property type="match status" value="1"/>
</dbReference>
<dbReference type="Pfam" id="PF02801">
    <property type="entry name" value="Ketoacyl-synt_C"/>
    <property type="match status" value="1"/>
</dbReference>
<dbReference type="SUPFAM" id="SSF53901">
    <property type="entry name" value="Thiolase-like"/>
    <property type="match status" value="2"/>
</dbReference>
<dbReference type="PROSITE" id="PS52004">
    <property type="entry name" value="KS3_2"/>
    <property type="match status" value="1"/>
</dbReference>
<protein>
    <recommendedName>
        <fullName>Granaticin polyketide putative beta-ketoacyl synthase 2</fullName>
        <ecNumber>2.3.1.-</ecNumber>
    </recommendedName>
    <alternativeName>
        <fullName>ORF2</fullName>
    </alternativeName>
</protein>
<comment type="pathway">
    <text>Antibiotic biosynthesis; granaticin biosynthesis.</text>
</comment>
<comment type="miscellaneous">
    <text>This putative ketoacyl synthase lacks the active site cysteine.</text>
</comment>
<comment type="similarity">
    <text evidence="2">Belongs to the thiolase-like superfamily. Beta-ketoacyl-ACP synthases family.</text>
</comment>
<keyword id="KW-0012">Acyltransferase</keyword>
<keyword id="KW-0045">Antibiotic biosynthesis</keyword>
<keyword id="KW-0808">Transferase</keyword>
<feature type="chain" id="PRO_0000180347" description="Granaticin polyketide putative beta-ketoacyl synthase 2">
    <location>
        <begin position="1"/>
        <end position="415"/>
    </location>
</feature>
<feature type="domain" description="Ketosynthase family 3 (KS3)" evidence="1">
    <location>
        <begin position="6"/>
        <end position="406"/>
    </location>
</feature>
<sequence>MSTPDRRRAVVTGLSVAAPGGLGTERYWKSLLTGENGIAELSRFDASRYPSRLAGQIDDFEASEHLPSRLLPQTDVSTRYALAAADWALADAGVGPESGLDDYDLGVVTSTAQGGFDFTHREFHKLWSQGPAYVSVYESFAWFYAVNTGQISIRNTMRGPSAALVGEQAGGLDAIGHARRTVRRGPGWCSAVASTRRSTRGASSSQLSGGLVSTVADPERAYLPFDVDASGYVPGEGGAVLIVEDADSARARGAERIYVRSPLRRDPAPGSGRPPALGRAAELALAEAGLTPADISVVFADGAGVPELDRAEADTLARLFGPRGVPVTAPKALTGRLCAGGGPADLAAALLALRDQVIPATGRHRAVPDAYALDLVTGRPREAALSAALVLARGRHGFNSAVVVTLRGSDHRRPT</sequence>